<protein>
    <recommendedName>
        <fullName evidence="1">Small ribosomal subunit protein eS6</fullName>
    </recommendedName>
    <alternativeName>
        <fullName evidence="2">30S ribosomal protein S6e</fullName>
    </alternativeName>
</protein>
<keyword id="KW-1185">Reference proteome</keyword>
<keyword id="KW-0687">Ribonucleoprotein</keyword>
<keyword id="KW-0689">Ribosomal protein</keyword>
<feature type="chain" id="PRO_0000137353" description="Small ribosomal subunit protein eS6">
    <location>
        <begin position="1"/>
        <end position="126"/>
    </location>
</feature>
<proteinExistence type="inferred from homology"/>
<organism>
    <name type="scientific">Nanoarchaeum equitans (strain Kin4-M)</name>
    <dbReference type="NCBI Taxonomy" id="228908"/>
    <lineage>
        <taxon>Archaea</taxon>
        <taxon>Nanobdellota</taxon>
        <taxon>Candidatus Nanoarchaeia</taxon>
        <taxon>Nanoarchaeales</taxon>
        <taxon>Nanoarchaeaceae</taxon>
        <taxon>Nanoarchaeum</taxon>
    </lineage>
</organism>
<evidence type="ECO:0000255" key="1">
    <source>
        <dbReference type="HAMAP-Rule" id="MF_00512"/>
    </source>
</evidence>
<evidence type="ECO:0000305" key="2"/>
<reference key="1">
    <citation type="journal article" date="2003" name="Proc. Natl. Acad. Sci. U.S.A.">
        <title>The genome of Nanoarchaeum equitans: insights into early archaeal evolution and derived parasitism.</title>
        <authorList>
            <person name="Waters E."/>
            <person name="Hohn M.J."/>
            <person name="Ahel I."/>
            <person name="Graham D.E."/>
            <person name="Adams M.D."/>
            <person name="Barnstead M."/>
            <person name="Beeson K.Y."/>
            <person name="Bibbs L."/>
            <person name="Bolanos R."/>
            <person name="Keller M."/>
            <person name="Kretz K."/>
            <person name="Lin X."/>
            <person name="Mathur E."/>
            <person name="Ni J."/>
            <person name="Podar M."/>
            <person name="Richardson T."/>
            <person name="Sutton G.G."/>
            <person name="Simon M."/>
            <person name="Soell D."/>
            <person name="Stetter K.O."/>
            <person name="Short J.M."/>
            <person name="Noorderwier M."/>
        </authorList>
    </citation>
    <scope>NUCLEOTIDE SEQUENCE [LARGE SCALE GENOMIC DNA]</scope>
    <source>
        <strain>Kin4-M</strain>
    </source>
</reference>
<sequence>MPKASVVKIVVSDPKSGKAIQIETKEPQWLYGKKIGDTIDGSKIGLDGYELKITGGSDIAGFPMRKEVEGAVRKKIWWWVDKRMRVKKTVYGNTISDEIVQVNTVIVKYGEKPFEEIYNEFKSNKQ</sequence>
<dbReference type="EMBL" id="AE017199">
    <property type="protein sequence ID" value="AAR38961.1"/>
    <property type="molecule type" value="Genomic_DNA"/>
</dbReference>
<dbReference type="SMR" id="Q74MJ5"/>
<dbReference type="STRING" id="228908.NEQ105"/>
<dbReference type="EnsemblBacteria" id="AAR38961">
    <property type="protein sequence ID" value="AAR38961"/>
    <property type="gene ID" value="NEQ105"/>
</dbReference>
<dbReference type="KEGG" id="neq:NEQ105"/>
<dbReference type="PATRIC" id="fig|228908.8.peg.111"/>
<dbReference type="HOGENOM" id="CLU_109671_1_1_2"/>
<dbReference type="Proteomes" id="UP000000578">
    <property type="component" value="Chromosome"/>
</dbReference>
<dbReference type="GO" id="GO:1990904">
    <property type="term" value="C:ribonucleoprotein complex"/>
    <property type="evidence" value="ECO:0007669"/>
    <property type="project" value="UniProtKB-KW"/>
</dbReference>
<dbReference type="GO" id="GO:0005840">
    <property type="term" value="C:ribosome"/>
    <property type="evidence" value="ECO:0007669"/>
    <property type="project" value="UniProtKB-KW"/>
</dbReference>
<dbReference type="GO" id="GO:0003735">
    <property type="term" value="F:structural constituent of ribosome"/>
    <property type="evidence" value="ECO:0007669"/>
    <property type="project" value="InterPro"/>
</dbReference>
<dbReference type="GO" id="GO:0006412">
    <property type="term" value="P:translation"/>
    <property type="evidence" value="ECO:0007669"/>
    <property type="project" value="UniProtKB-UniRule"/>
</dbReference>
<dbReference type="HAMAP" id="MF_00512">
    <property type="entry name" value="Ribosomal_eS6"/>
    <property type="match status" value="1"/>
</dbReference>
<dbReference type="InterPro" id="IPR001377">
    <property type="entry name" value="Ribosomal_eS6"/>
</dbReference>
<dbReference type="InterPro" id="IPR020924">
    <property type="entry name" value="Ribosomal_eS6_arc"/>
</dbReference>
<dbReference type="InterPro" id="IPR018282">
    <property type="entry name" value="Ribosomal_eS6_CS"/>
</dbReference>
<dbReference type="NCBIfam" id="NF003294">
    <property type="entry name" value="PRK04290.1-3"/>
    <property type="match status" value="1"/>
</dbReference>
<dbReference type="PANTHER" id="PTHR11502">
    <property type="entry name" value="40S RIBOSOMAL PROTEIN S6"/>
    <property type="match status" value="1"/>
</dbReference>
<dbReference type="Pfam" id="PF01092">
    <property type="entry name" value="Ribosomal_S6e"/>
    <property type="match status" value="1"/>
</dbReference>
<dbReference type="SMART" id="SM01405">
    <property type="entry name" value="Ribosomal_S6e"/>
    <property type="match status" value="1"/>
</dbReference>
<dbReference type="PROSITE" id="PS00578">
    <property type="entry name" value="RIBOSOMAL_S6E"/>
    <property type="match status" value="1"/>
</dbReference>
<name>RS6E_NANEQ</name>
<comment type="similarity">
    <text evidence="1">Belongs to the eukaryotic ribosomal protein eS6 family.</text>
</comment>
<accession>Q74MJ5</accession>
<gene>
    <name evidence="1" type="primary">rps6e</name>
    <name type="ordered locus">NEQ105</name>
</gene>